<dbReference type="EMBL" id="M37159">
    <property type="protein sequence ID" value="AAA21707.1"/>
    <property type="molecule type" value="Genomic_DNA"/>
</dbReference>
<dbReference type="EMBL" id="AF158101">
    <property type="protein sequence ID" value="AAD42583.1"/>
    <property type="molecule type" value="Genomic_DNA"/>
</dbReference>
<dbReference type="PIR" id="JU0098">
    <property type="entry name" value="G2BPT4"/>
</dbReference>
<dbReference type="RefSeq" id="NP_049661.1">
    <property type="nucleotide sequence ID" value="NC_000866.4"/>
</dbReference>
<dbReference type="GeneID" id="1258538"/>
<dbReference type="KEGG" id="vg:1258538"/>
<dbReference type="OrthoDB" id="13365at10239"/>
<dbReference type="Proteomes" id="UP000009087">
    <property type="component" value="Segment"/>
</dbReference>
<dbReference type="InterPro" id="IPR035146">
    <property type="entry name" value="DUF5481"/>
</dbReference>
<dbReference type="Pfam" id="PF17578">
    <property type="entry name" value="DUF5481"/>
    <property type="match status" value="1"/>
</dbReference>
<keyword id="KW-1185">Reference proteome</keyword>
<protein>
    <recommendedName>
        <fullName>Uncharacterized 14.1 kDa protein in imm-Gp43 intergenic region</fullName>
    </recommendedName>
</protein>
<proteinExistence type="predicted"/>
<organismHost>
    <name type="scientific">Escherichia coli</name>
    <dbReference type="NCBI Taxonomy" id="562"/>
</organismHost>
<feature type="chain" id="PRO_0000165097" description="Uncharacterized 14.1 kDa protein in imm-Gp43 intergenic region">
    <location>
        <begin position="1"/>
        <end position="125"/>
    </location>
</feature>
<gene>
    <name type="primary">y02D</name>
    <name type="synonym">42.2</name>
    <name type="synonym">imm.1</name>
</gene>
<organism>
    <name type="scientific">Enterobacteria phage T4</name>
    <name type="common">Bacteriophage T4</name>
    <dbReference type="NCBI Taxonomy" id="10665"/>
    <lineage>
        <taxon>Viruses</taxon>
        <taxon>Duplodnaviria</taxon>
        <taxon>Heunggongvirae</taxon>
        <taxon>Uroviricota</taxon>
        <taxon>Caudoviricetes</taxon>
        <taxon>Straboviridae</taxon>
        <taxon>Tevenvirinae</taxon>
        <taxon>Tequatrovirus</taxon>
    </lineage>
</organism>
<accession>P18057</accession>
<reference key="1">
    <citation type="journal article" date="1988" name="Eur. J. Biochem.">
        <title>Deoxycytidylate hydroxymethylase gene of bacteriophage T4. Nucleotide sequence determination and over-expression of the gene.</title>
        <authorList>
            <person name="Lamm N."/>
            <person name="Wang Y."/>
            <person name="Mathews C.K."/>
            <person name="Rueger W."/>
        </authorList>
    </citation>
    <scope>NUCLEOTIDE SEQUENCE [GENOMIC DNA]</scope>
</reference>
<reference key="2">
    <citation type="journal article" date="2003" name="Microbiol. Mol. Biol. Rev.">
        <title>Bacteriophage T4 genome.</title>
        <authorList>
            <person name="Miller E.S."/>
            <person name="Kutter E."/>
            <person name="Mosig G."/>
            <person name="Arisaka F."/>
            <person name="Kunisawa T."/>
            <person name="Ruger W."/>
        </authorList>
    </citation>
    <scope>NUCLEOTIDE SEQUENCE [LARGE SCALE GENOMIC DNA]</scope>
</reference>
<name>Y02D_BPT4</name>
<sequence length="125" mass="14074">MKIAILVIALGLAGCVAQGPVVNQSDVGKIVNCSSKFYNPNVKCYKEAPKQTVEQMQANFDEAIRPDESAQAYRNSDVITREEKIENYCAELWANWANNYQWRTGKNAPMEYVVNSYNSCVKNLT</sequence>